<feature type="chain" id="PRO_0000165536" description="Holliday junction branch migration complex subunit RuvB">
    <location>
        <begin position="1"/>
        <end position="334"/>
    </location>
</feature>
<feature type="region of interest" description="Large ATPase domain (RuvB-L)" evidence="1">
    <location>
        <begin position="4"/>
        <end position="184"/>
    </location>
</feature>
<feature type="region of interest" description="Small ATPAse domain (RuvB-S)" evidence="1">
    <location>
        <begin position="185"/>
        <end position="255"/>
    </location>
</feature>
<feature type="region of interest" description="Head domain (RuvB-H)" evidence="1">
    <location>
        <begin position="258"/>
        <end position="334"/>
    </location>
</feature>
<feature type="binding site" evidence="1">
    <location>
        <position position="23"/>
    </location>
    <ligand>
        <name>ATP</name>
        <dbReference type="ChEBI" id="CHEBI:30616"/>
    </ligand>
</feature>
<feature type="binding site" evidence="1">
    <location>
        <position position="24"/>
    </location>
    <ligand>
        <name>ATP</name>
        <dbReference type="ChEBI" id="CHEBI:30616"/>
    </ligand>
</feature>
<feature type="binding site" evidence="1">
    <location>
        <position position="65"/>
    </location>
    <ligand>
        <name>ATP</name>
        <dbReference type="ChEBI" id="CHEBI:30616"/>
    </ligand>
</feature>
<feature type="binding site" evidence="1">
    <location>
        <position position="68"/>
    </location>
    <ligand>
        <name>ATP</name>
        <dbReference type="ChEBI" id="CHEBI:30616"/>
    </ligand>
</feature>
<feature type="binding site" evidence="1">
    <location>
        <position position="69"/>
    </location>
    <ligand>
        <name>ATP</name>
        <dbReference type="ChEBI" id="CHEBI:30616"/>
    </ligand>
</feature>
<feature type="binding site" evidence="1">
    <location>
        <position position="69"/>
    </location>
    <ligand>
        <name>Mg(2+)</name>
        <dbReference type="ChEBI" id="CHEBI:18420"/>
    </ligand>
</feature>
<feature type="binding site" evidence="1">
    <location>
        <position position="70"/>
    </location>
    <ligand>
        <name>ATP</name>
        <dbReference type="ChEBI" id="CHEBI:30616"/>
    </ligand>
</feature>
<feature type="binding site" evidence="1">
    <location>
        <begin position="131"/>
        <end position="133"/>
    </location>
    <ligand>
        <name>ATP</name>
        <dbReference type="ChEBI" id="CHEBI:30616"/>
    </ligand>
</feature>
<feature type="binding site" evidence="1">
    <location>
        <position position="174"/>
    </location>
    <ligand>
        <name>ATP</name>
        <dbReference type="ChEBI" id="CHEBI:30616"/>
    </ligand>
</feature>
<feature type="binding site" evidence="1">
    <location>
        <position position="184"/>
    </location>
    <ligand>
        <name>ATP</name>
        <dbReference type="ChEBI" id="CHEBI:30616"/>
    </ligand>
</feature>
<feature type="binding site" evidence="1">
    <location>
        <position position="221"/>
    </location>
    <ligand>
        <name>ATP</name>
        <dbReference type="ChEBI" id="CHEBI:30616"/>
    </ligand>
</feature>
<feature type="binding site" evidence="1">
    <location>
        <position position="294"/>
    </location>
    <ligand>
        <name>DNA</name>
        <dbReference type="ChEBI" id="CHEBI:16991"/>
    </ligand>
</feature>
<feature type="binding site" evidence="1">
    <location>
        <position position="313"/>
    </location>
    <ligand>
        <name>DNA</name>
        <dbReference type="ChEBI" id="CHEBI:16991"/>
    </ligand>
</feature>
<feature type="binding site" evidence="1">
    <location>
        <position position="318"/>
    </location>
    <ligand>
        <name>DNA</name>
        <dbReference type="ChEBI" id="CHEBI:16991"/>
    </ligand>
</feature>
<organism>
    <name type="scientific">Haemophilus ducreyi (strain 35000HP / ATCC 700724)</name>
    <dbReference type="NCBI Taxonomy" id="233412"/>
    <lineage>
        <taxon>Bacteria</taxon>
        <taxon>Pseudomonadati</taxon>
        <taxon>Pseudomonadota</taxon>
        <taxon>Gammaproteobacteria</taxon>
        <taxon>Pasteurellales</taxon>
        <taxon>Pasteurellaceae</taxon>
        <taxon>Haemophilus</taxon>
    </lineage>
</organism>
<comment type="function">
    <text evidence="1">The RuvA-RuvB-RuvC complex processes Holliday junction (HJ) DNA during genetic recombination and DNA repair, while the RuvA-RuvB complex plays an important role in the rescue of blocked DNA replication forks via replication fork reversal (RFR). RuvA specifically binds to HJ cruciform DNA, conferring on it an open structure. The RuvB hexamer acts as an ATP-dependent pump, pulling dsDNA into and through the RuvAB complex. RuvB forms 2 homohexamers on either side of HJ DNA bound by 1 or 2 RuvA tetramers; 4 subunits per hexamer contact DNA at a time. Coordinated motions by a converter formed by DNA-disengaged RuvB subunits stimulates ATP hydrolysis and nucleotide exchange. Immobilization of the converter enables RuvB to convert the ATP-contained energy into a lever motion, pulling 2 nucleotides of DNA out of the RuvA tetramer per ATP hydrolyzed, thus driving DNA branch migration. The RuvB motors rotate together with the DNA substrate, which together with the progressing nucleotide cycle form the mechanistic basis for DNA recombination by continuous HJ branch migration. Branch migration allows RuvC to scan DNA until it finds its consensus sequence, where it cleaves and resolves cruciform DNA.</text>
</comment>
<comment type="catalytic activity">
    <reaction evidence="1">
        <text>ATP + H2O = ADP + phosphate + H(+)</text>
        <dbReference type="Rhea" id="RHEA:13065"/>
        <dbReference type="ChEBI" id="CHEBI:15377"/>
        <dbReference type="ChEBI" id="CHEBI:15378"/>
        <dbReference type="ChEBI" id="CHEBI:30616"/>
        <dbReference type="ChEBI" id="CHEBI:43474"/>
        <dbReference type="ChEBI" id="CHEBI:456216"/>
    </reaction>
</comment>
<comment type="subunit">
    <text evidence="1">Homohexamer. Forms an RuvA(8)-RuvB(12)-Holliday junction (HJ) complex. HJ DNA is sandwiched between 2 RuvA tetramers; dsDNA enters through RuvA and exits via RuvB. An RuvB hexamer assembles on each DNA strand where it exits the tetramer. Each RuvB hexamer is contacted by two RuvA subunits (via domain III) on 2 adjacent RuvB subunits; this complex drives branch migration. In the full resolvosome a probable DNA-RuvA(4)-RuvB(12)-RuvC(2) complex forms which resolves the HJ.</text>
</comment>
<comment type="subcellular location">
    <subcellularLocation>
        <location evidence="1">Cytoplasm</location>
    </subcellularLocation>
</comment>
<comment type="domain">
    <text evidence="1">Has 3 domains, the large (RuvB-L) and small ATPase (RuvB-S) domains and the C-terminal head (RuvB-H) domain. The head domain binds DNA, while the ATPase domains jointly bind ATP, ADP or are empty depending on the state of the subunit in the translocation cycle. During a single DNA translocation step the structure of each domain remains the same, but their relative positions change.</text>
</comment>
<comment type="similarity">
    <text evidence="1">Belongs to the RuvB family.</text>
</comment>
<evidence type="ECO:0000255" key="1">
    <source>
        <dbReference type="HAMAP-Rule" id="MF_00016"/>
    </source>
</evidence>
<gene>
    <name evidence="1" type="primary">ruvB</name>
    <name type="ordered locus">HD_1757</name>
</gene>
<name>RUVB_HAEDU</name>
<dbReference type="EC" id="3.6.4.-" evidence="1"/>
<dbReference type="EMBL" id="AE017143">
    <property type="protein sequence ID" value="AAP96512.1"/>
    <property type="molecule type" value="Genomic_DNA"/>
</dbReference>
<dbReference type="RefSeq" id="WP_010945541.1">
    <property type="nucleotide sequence ID" value="NC_002940.2"/>
</dbReference>
<dbReference type="SMR" id="Q7VKV5"/>
<dbReference type="STRING" id="233412.HD_1757"/>
<dbReference type="KEGG" id="hdu:HD_1757"/>
<dbReference type="eggNOG" id="COG2255">
    <property type="taxonomic scope" value="Bacteria"/>
</dbReference>
<dbReference type="HOGENOM" id="CLU_055599_1_0_6"/>
<dbReference type="OrthoDB" id="9804478at2"/>
<dbReference type="Proteomes" id="UP000001022">
    <property type="component" value="Chromosome"/>
</dbReference>
<dbReference type="GO" id="GO:0005737">
    <property type="term" value="C:cytoplasm"/>
    <property type="evidence" value="ECO:0007669"/>
    <property type="project" value="UniProtKB-SubCell"/>
</dbReference>
<dbReference type="GO" id="GO:0048476">
    <property type="term" value="C:Holliday junction resolvase complex"/>
    <property type="evidence" value="ECO:0007669"/>
    <property type="project" value="UniProtKB-UniRule"/>
</dbReference>
<dbReference type="GO" id="GO:0005524">
    <property type="term" value="F:ATP binding"/>
    <property type="evidence" value="ECO:0007669"/>
    <property type="project" value="UniProtKB-UniRule"/>
</dbReference>
<dbReference type="GO" id="GO:0016887">
    <property type="term" value="F:ATP hydrolysis activity"/>
    <property type="evidence" value="ECO:0007669"/>
    <property type="project" value="InterPro"/>
</dbReference>
<dbReference type="GO" id="GO:0000400">
    <property type="term" value="F:four-way junction DNA binding"/>
    <property type="evidence" value="ECO:0007669"/>
    <property type="project" value="UniProtKB-UniRule"/>
</dbReference>
<dbReference type="GO" id="GO:0009378">
    <property type="term" value="F:four-way junction helicase activity"/>
    <property type="evidence" value="ECO:0007669"/>
    <property type="project" value="InterPro"/>
</dbReference>
<dbReference type="GO" id="GO:0006310">
    <property type="term" value="P:DNA recombination"/>
    <property type="evidence" value="ECO:0007669"/>
    <property type="project" value="UniProtKB-UniRule"/>
</dbReference>
<dbReference type="GO" id="GO:0006281">
    <property type="term" value="P:DNA repair"/>
    <property type="evidence" value="ECO:0007669"/>
    <property type="project" value="UniProtKB-UniRule"/>
</dbReference>
<dbReference type="CDD" id="cd00009">
    <property type="entry name" value="AAA"/>
    <property type="match status" value="1"/>
</dbReference>
<dbReference type="FunFam" id="1.10.10.10:FF:000086">
    <property type="entry name" value="Holliday junction ATP-dependent DNA helicase RuvB"/>
    <property type="match status" value="1"/>
</dbReference>
<dbReference type="FunFam" id="1.10.8.60:FF:000023">
    <property type="entry name" value="Holliday junction ATP-dependent DNA helicase RuvB"/>
    <property type="match status" value="1"/>
</dbReference>
<dbReference type="FunFam" id="3.40.50.300:FF:000073">
    <property type="entry name" value="Holliday junction ATP-dependent DNA helicase RuvB"/>
    <property type="match status" value="1"/>
</dbReference>
<dbReference type="Gene3D" id="1.10.8.60">
    <property type="match status" value="1"/>
</dbReference>
<dbReference type="Gene3D" id="3.40.50.300">
    <property type="entry name" value="P-loop containing nucleotide triphosphate hydrolases"/>
    <property type="match status" value="1"/>
</dbReference>
<dbReference type="Gene3D" id="1.10.10.10">
    <property type="entry name" value="Winged helix-like DNA-binding domain superfamily/Winged helix DNA-binding domain"/>
    <property type="match status" value="1"/>
</dbReference>
<dbReference type="HAMAP" id="MF_00016">
    <property type="entry name" value="DNA_HJ_migration_RuvB"/>
    <property type="match status" value="1"/>
</dbReference>
<dbReference type="InterPro" id="IPR003593">
    <property type="entry name" value="AAA+_ATPase"/>
</dbReference>
<dbReference type="InterPro" id="IPR041445">
    <property type="entry name" value="AAA_lid_4"/>
</dbReference>
<dbReference type="InterPro" id="IPR004605">
    <property type="entry name" value="DNA_helicase_Holl-junc_RuvB"/>
</dbReference>
<dbReference type="InterPro" id="IPR027417">
    <property type="entry name" value="P-loop_NTPase"/>
</dbReference>
<dbReference type="InterPro" id="IPR008824">
    <property type="entry name" value="RuvB-like_N"/>
</dbReference>
<dbReference type="InterPro" id="IPR008823">
    <property type="entry name" value="RuvB_C"/>
</dbReference>
<dbReference type="InterPro" id="IPR036388">
    <property type="entry name" value="WH-like_DNA-bd_sf"/>
</dbReference>
<dbReference type="InterPro" id="IPR036390">
    <property type="entry name" value="WH_DNA-bd_sf"/>
</dbReference>
<dbReference type="NCBIfam" id="NF000868">
    <property type="entry name" value="PRK00080.1"/>
    <property type="match status" value="1"/>
</dbReference>
<dbReference type="NCBIfam" id="TIGR00635">
    <property type="entry name" value="ruvB"/>
    <property type="match status" value="1"/>
</dbReference>
<dbReference type="PANTHER" id="PTHR42848">
    <property type="match status" value="1"/>
</dbReference>
<dbReference type="PANTHER" id="PTHR42848:SF1">
    <property type="entry name" value="HOLLIDAY JUNCTION BRANCH MIGRATION COMPLEX SUBUNIT RUVB"/>
    <property type="match status" value="1"/>
</dbReference>
<dbReference type="Pfam" id="PF17864">
    <property type="entry name" value="AAA_lid_4"/>
    <property type="match status" value="1"/>
</dbReference>
<dbReference type="Pfam" id="PF05491">
    <property type="entry name" value="RuvB_C"/>
    <property type="match status" value="1"/>
</dbReference>
<dbReference type="Pfam" id="PF05496">
    <property type="entry name" value="RuvB_N"/>
    <property type="match status" value="1"/>
</dbReference>
<dbReference type="SMART" id="SM00382">
    <property type="entry name" value="AAA"/>
    <property type="match status" value="1"/>
</dbReference>
<dbReference type="SUPFAM" id="SSF52540">
    <property type="entry name" value="P-loop containing nucleoside triphosphate hydrolases"/>
    <property type="match status" value="1"/>
</dbReference>
<dbReference type="SUPFAM" id="SSF46785">
    <property type="entry name" value="Winged helix' DNA-binding domain"/>
    <property type="match status" value="1"/>
</dbReference>
<keyword id="KW-0067">ATP-binding</keyword>
<keyword id="KW-0963">Cytoplasm</keyword>
<keyword id="KW-0227">DNA damage</keyword>
<keyword id="KW-0233">DNA recombination</keyword>
<keyword id="KW-0234">DNA repair</keyword>
<keyword id="KW-0238">DNA-binding</keyword>
<keyword id="KW-0378">Hydrolase</keyword>
<keyword id="KW-0547">Nucleotide-binding</keyword>
<keyword id="KW-1185">Reference proteome</keyword>
<protein>
    <recommendedName>
        <fullName evidence="1">Holliday junction branch migration complex subunit RuvB</fullName>
        <ecNumber evidence="1">3.6.4.-</ecNumber>
    </recommendedName>
</protein>
<sequence>MIEADRIISASPQREEEVVDRAIRPKLLTDYVGQPSVREQMEIFIKAAKLRHEALDHLLIFGPPGLGKTTLANIVANEMGVNIRTTSGPVLEKAGDLAAMLTNLEPYDILFIDEIHRLSPAIEEVLYPAMEDYQLDIMIGEGPAARSIKLDLPPFTLVGATTRAGSLTSPLRDRFGIVQRLEFYNVDDLTSIVKRSAACLNLNLSADGAYEVARRSRGTPRIANRLLRRVRDYADVRNNGVITSEIAKQALVMLDVDPQGFDFMDIKLLQAIVERFDGGPVGLDNLAAAIGEERETIEDVLEPYLIQQGFLQRTPRGRIATTRTYAHLGISLSE</sequence>
<proteinExistence type="inferred from homology"/>
<accession>Q7VKV5</accession>
<reference key="1">
    <citation type="submission" date="2003-06" db="EMBL/GenBank/DDBJ databases">
        <title>The complete genome sequence of Haemophilus ducreyi.</title>
        <authorList>
            <person name="Munson R.S. Jr."/>
            <person name="Ray W.C."/>
            <person name="Mahairas G."/>
            <person name="Sabo P."/>
            <person name="Mungur R."/>
            <person name="Johnson L."/>
            <person name="Nguyen D."/>
            <person name="Wang J."/>
            <person name="Forst C."/>
            <person name="Hood L."/>
        </authorList>
    </citation>
    <scope>NUCLEOTIDE SEQUENCE [LARGE SCALE GENOMIC DNA]</scope>
    <source>
        <strain>35000HP / ATCC 700724</strain>
    </source>
</reference>